<evidence type="ECO:0000255" key="1">
    <source>
        <dbReference type="HAMAP-Rule" id="MF_00536"/>
    </source>
</evidence>
<reference key="1">
    <citation type="journal article" date="2006" name="PLoS Genet.">
        <title>The complete genome sequence and comparative genome analysis of the high pathogenicity Yersinia enterocolitica strain 8081.</title>
        <authorList>
            <person name="Thomson N.R."/>
            <person name="Howard S."/>
            <person name="Wren B.W."/>
            <person name="Holden M.T.G."/>
            <person name="Crossman L."/>
            <person name="Challis G.L."/>
            <person name="Churcher C."/>
            <person name="Mungall K."/>
            <person name="Brooks K."/>
            <person name="Chillingworth T."/>
            <person name="Feltwell T."/>
            <person name="Abdellah Z."/>
            <person name="Hauser H."/>
            <person name="Jagels K."/>
            <person name="Maddison M."/>
            <person name="Moule S."/>
            <person name="Sanders M."/>
            <person name="Whitehead S."/>
            <person name="Quail M.A."/>
            <person name="Dougan G."/>
            <person name="Parkhill J."/>
            <person name="Prentice M.B."/>
        </authorList>
    </citation>
    <scope>NUCLEOTIDE SEQUENCE [LARGE SCALE GENOMIC DNA]</scope>
    <source>
        <strain>NCTC 13174 / 8081</strain>
    </source>
</reference>
<proteinExistence type="inferred from homology"/>
<organism>
    <name type="scientific">Yersinia enterocolitica serotype O:8 / biotype 1B (strain NCTC 13174 / 8081)</name>
    <dbReference type="NCBI Taxonomy" id="393305"/>
    <lineage>
        <taxon>Bacteria</taxon>
        <taxon>Pseudomonadati</taxon>
        <taxon>Pseudomonadota</taxon>
        <taxon>Gammaproteobacteria</taxon>
        <taxon>Enterobacterales</taxon>
        <taxon>Yersiniaceae</taxon>
        <taxon>Yersinia</taxon>
    </lineage>
</organism>
<dbReference type="EC" id="1.1.1.262" evidence="1"/>
<dbReference type="EMBL" id="AM286415">
    <property type="protein sequence ID" value="CAL10743.1"/>
    <property type="molecule type" value="Genomic_DNA"/>
</dbReference>
<dbReference type="RefSeq" id="WP_005167004.1">
    <property type="nucleotide sequence ID" value="NC_008800.1"/>
</dbReference>
<dbReference type="RefSeq" id="YP_001004983.1">
    <property type="nucleotide sequence ID" value="NC_008800.1"/>
</dbReference>
<dbReference type="SMR" id="A1JJF5"/>
<dbReference type="KEGG" id="yen:YE0631"/>
<dbReference type="PATRIC" id="fig|393305.7.peg.724"/>
<dbReference type="eggNOG" id="COG1995">
    <property type="taxonomic scope" value="Bacteria"/>
</dbReference>
<dbReference type="HOGENOM" id="CLU_040168_1_0_6"/>
<dbReference type="OrthoDB" id="9801783at2"/>
<dbReference type="UniPathway" id="UPA00244">
    <property type="reaction ID" value="UER00312"/>
</dbReference>
<dbReference type="Proteomes" id="UP000000642">
    <property type="component" value="Chromosome"/>
</dbReference>
<dbReference type="GO" id="GO:0005737">
    <property type="term" value="C:cytoplasm"/>
    <property type="evidence" value="ECO:0007669"/>
    <property type="project" value="UniProtKB-SubCell"/>
</dbReference>
<dbReference type="GO" id="GO:0050570">
    <property type="term" value="F:4-hydroxythreonine-4-phosphate dehydrogenase activity"/>
    <property type="evidence" value="ECO:0007669"/>
    <property type="project" value="UniProtKB-UniRule"/>
</dbReference>
<dbReference type="GO" id="GO:0050897">
    <property type="term" value="F:cobalt ion binding"/>
    <property type="evidence" value="ECO:0007669"/>
    <property type="project" value="UniProtKB-UniRule"/>
</dbReference>
<dbReference type="GO" id="GO:0000287">
    <property type="term" value="F:magnesium ion binding"/>
    <property type="evidence" value="ECO:0007669"/>
    <property type="project" value="UniProtKB-UniRule"/>
</dbReference>
<dbReference type="GO" id="GO:0051287">
    <property type="term" value="F:NAD binding"/>
    <property type="evidence" value="ECO:0007669"/>
    <property type="project" value="InterPro"/>
</dbReference>
<dbReference type="GO" id="GO:0008270">
    <property type="term" value="F:zinc ion binding"/>
    <property type="evidence" value="ECO:0007669"/>
    <property type="project" value="UniProtKB-UniRule"/>
</dbReference>
<dbReference type="GO" id="GO:0042823">
    <property type="term" value="P:pyridoxal phosphate biosynthetic process"/>
    <property type="evidence" value="ECO:0007669"/>
    <property type="project" value="UniProtKB-UniRule"/>
</dbReference>
<dbReference type="GO" id="GO:0008615">
    <property type="term" value="P:pyridoxine biosynthetic process"/>
    <property type="evidence" value="ECO:0007669"/>
    <property type="project" value="UniProtKB-UniRule"/>
</dbReference>
<dbReference type="Gene3D" id="3.40.718.10">
    <property type="entry name" value="Isopropylmalate Dehydrogenase"/>
    <property type="match status" value="1"/>
</dbReference>
<dbReference type="HAMAP" id="MF_00536">
    <property type="entry name" value="PdxA"/>
    <property type="match status" value="1"/>
</dbReference>
<dbReference type="InterPro" id="IPR037510">
    <property type="entry name" value="PdxA"/>
</dbReference>
<dbReference type="InterPro" id="IPR005255">
    <property type="entry name" value="PdxA_fam"/>
</dbReference>
<dbReference type="NCBIfam" id="TIGR00557">
    <property type="entry name" value="pdxA"/>
    <property type="match status" value="1"/>
</dbReference>
<dbReference type="PANTHER" id="PTHR30004">
    <property type="entry name" value="4-HYDROXYTHREONINE-4-PHOSPHATE DEHYDROGENASE"/>
    <property type="match status" value="1"/>
</dbReference>
<dbReference type="PANTHER" id="PTHR30004:SF5">
    <property type="entry name" value="4-HYDROXYTHREONINE-4-PHOSPHATE DEHYDROGENASE"/>
    <property type="match status" value="1"/>
</dbReference>
<dbReference type="Pfam" id="PF04166">
    <property type="entry name" value="PdxA"/>
    <property type="match status" value="1"/>
</dbReference>
<dbReference type="SUPFAM" id="SSF53659">
    <property type="entry name" value="Isocitrate/Isopropylmalate dehydrogenase-like"/>
    <property type="match status" value="1"/>
</dbReference>
<feature type="chain" id="PRO_1000061035" description="4-hydroxythreonine-4-phosphate dehydrogenase">
    <location>
        <begin position="1"/>
        <end position="331"/>
    </location>
</feature>
<feature type="binding site" evidence="1">
    <location>
        <position position="137"/>
    </location>
    <ligand>
        <name>substrate</name>
    </ligand>
</feature>
<feature type="binding site" evidence="1">
    <location>
        <position position="138"/>
    </location>
    <ligand>
        <name>substrate</name>
    </ligand>
</feature>
<feature type="binding site" evidence="1">
    <location>
        <position position="167"/>
    </location>
    <ligand>
        <name>a divalent metal cation</name>
        <dbReference type="ChEBI" id="CHEBI:60240"/>
        <note>ligand shared between dimeric partners</note>
    </ligand>
</feature>
<feature type="binding site" evidence="1">
    <location>
        <position position="212"/>
    </location>
    <ligand>
        <name>a divalent metal cation</name>
        <dbReference type="ChEBI" id="CHEBI:60240"/>
        <note>ligand shared between dimeric partners</note>
    </ligand>
</feature>
<feature type="binding site" evidence="1">
    <location>
        <position position="267"/>
    </location>
    <ligand>
        <name>a divalent metal cation</name>
        <dbReference type="ChEBI" id="CHEBI:60240"/>
        <note>ligand shared between dimeric partners</note>
    </ligand>
</feature>
<feature type="binding site" evidence="1">
    <location>
        <position position="275"/>
    </location>
    <ligand>
        <name>substrate</name>
    </ligand>
</feature>
<feature type="binding site" evidence="1">
    <location>
        <position position="284"/>
    </location>
    <ligand>
        <name>substrate</name>
    </ligand>
</feature>
<feature type="binding site" evidence="1">
    <location>
        <position position="293"/>
    </location>
    <ligand>
        <name>substrate</name>
    </ligand>
</feature>
<name>PDXA_YERE8</name>
<gene>
    <name evidence="1" type="primary">pdxA</name>
    <name type="ordered locus">YE0631</name>
</gene>
<protein>
    <recommendedName>
        <fullName evidence="1">4-hydroxythreonine-4-phosphate dehydrogenase</fullName>
        <ecNumber evidence="1">1.1.1.262</ecNumber>
    </recommendedName>
    <alternativeName>
        <fullName evidence="1">4-(phosphohydroxy)-L-threonine dehydrogenase</fullName>
    </alternativeName>
</protein>
<accession>A1JJF5</accession>
<sequence>MQNHNNRIVITPGEPAGVGPDLVIALAQQDWPVELVVCADPALLLTRASQLNLPLQLREYQQDKPALAQLAGTLTILPVKIAAEVIPGQLDVKNSHYVVETLAKACDGAISGEFAALVTGPVQKSIINDAGIPFIGHTEFFADRSHCSRVVMMLATEELRVALATTHLPLLAVPGAITQTSLHEVISILDNDLKTKFGISQPQIYVCGLNPHAGEGGHMGHEEIETIIPALATLRQQGINLIGPLPADTLFQPKYLQHADAVLAMYHDQGLPVLKYQGFGRAVNITLGLPFIRTSVDHGTALELAATGTADVGSFITALNLAIKMINNSNE</sequence>
<keyword id="KW-0170">Cobalt</keyword>
<keyword id="KW-0963">Cytoplasm</keyword>
<keyword id="KW-0460">Magnesium</keyword>
<keyword id="KW-0479">Metal-binding</keyword>
<keyword id="KW-0520">NAD</keyword>
<keyword id="KW-0521">NADP</keyword>
<keyword id="KW-0560">Oxidoreductase</keyword>
<keyword id="KW-0664">Pyridoxine biosynthesis</keyword>
<keyword id="KW-0862">Zinc</keyword>
<comment type="function">
    <text evidence="1">Catalyzes the NAD(P)-dependent oxidation of 4-(phosphooxy)-L-threonine (HTP) into 2-amino-3-oxo-4-(phosphooxy)butyric acid which spontaneously decarboxylates to form 3-amino-2-oxopropyl phosphate (AHAP).</text>
</comment>
<comment type="catalytic activity">
    <reaction evidence="1">
        <text>4-(phosphooxy)-L-threonine + NAD(+) = 3-amino-2-oxopropyl phosphate + CO2 + NADH</text>
        <dbReference type="Rhea" id="RHEA:32275"/>
        <dbReference type="ChEBI" id="CHEBI:16526"/>
        <dbReference type="ChEBI" id="CHEBI:57279"/>
        <dbReference type="ChEBI" id="CHEBI:57540"/>
        <dbReference type="ChEBI" id="CHEBI:57945"/>
        <dbReference type="ChEBI" id="CHEBI:58452"/>
        <dbReference type="EC" id="1.1.1.262"/>
    </reaction>
</comment>
<comment type="cofactor">
    <cofactor evidence="1">
        <name>Zn(2+)</name>
        <dbReference type="ChEBI" id="CHEBI:29105"/>
    </cofactor>
    <cofactor evidence="1">
        <name>Mg(2+)</name>
        <dbReference type="ChEBI" id="CHEBI:18420"/>
    </cofactor>
    <cofactor evidence="1">
        <name>Co(2+)</name>
        <dbReference type="ChEBI" id="CHEBI:48828"/>
    </cofactor>
    <text evidence="1">Binds 1 divalent metal cation per subunit. Can use ions such as Zn(2+), Mg(2+) or Co(2+).</text>
</comment>
<comment type="pathway">
    <text evidence="1">Cofactor biosynthesis; pyridoxine 5'-phosphate biosynthesis; pyridoxine 5'-phosphate from D-erythrose 4-phosphate: step 4/5.</text>
</comment>
<comment type="subunit">
    <text evidence="1">Homodimer.</text>
</comment>
<comment type="subcellular location">
    <subcellularLocation>
        <location evidence="1">Cytoplasm</location>
    </subcellularLocation>
</comment>
<comment type="miscellaneous">
    <text evidence="1">The active site is located at the dimer interface.</text>
</comment>
<comment type="similarity">
    <text evidence="1">Belongs to the PdxA family.</text>
</comment>